<dbReference type="EC" id="2.7.12.2" evidence="12"/>
<dbReference type="EMBL" id="L36719">
    <property type="protein sequence ID" value="AAC41718.1"/>
    <property type="molecule type" value="mRNA"/>
</dbReference>
<dbReference type="EMBL" id="D87116">
    <property type="protein sequence ID" value="BAA13248.1"/>
    <property type="molecule type" value="mRNA"/>
</dbReference>
<dbReference type="EMBL" id="U66839">
    <property type="protein sequence ID" value="AAB40652.1"/>
    <property type="molecule type" value="mRNA"/>
</dbReference>
<dbReference type="EMBL" id="U66840">
    <property type="protein sequence ID" value="AAB40653.1"/>
    <property type="molecule type" value="Genomic_DNA"/>
</dbReference>
<dbReference type="EMBL" id="AK093838">
    <property type="protein sequence ID" value="BAG52769.1"/>
    <property type="molecule type" value="mRNA"/>
</dbReference>
<dbReference type="EMBL" id="BC032478">
    <property type="protein sequence ID" value="AAH32478.1"/>
    <property type="molecule type" value="mRNA"/>
</dbReference>
<dbReference type="CCDS" id="CCDS11217.1">
    <molecule id="P46734-1"/>
</dbReference>
<dbReference type="CCDS" id="CCDS11218.1">
    <molecule id="P46734-2"/>
</dbReference>
<dbReference type="RefSeq" id="NP_001303261.1">
    <molecule id="P46734-2"/>
    <property type="nucleotide sequence ID" value="NM_001316332.2"/>
</dbReference>
<dbReference type="RefSeq" id="NP_002747.2">
    <molecule id="P46734-2"/>
    <property type="nucleotide sequence ID" value="NM_002756.4"/>
</dbReference>
<dbReference type="RefSeq" id="NP_659731.1">
    <molecule id="P46734-1"/>
    <property type="nucleotide sequence ID" value="NM_145109.3"/>
</dbReference>
<dbReference type="RefSeq" id="XP_005256780.1">
    <property type="nucleotide sequence ID" value="XM_005256723.2"/>
</dbReference>
<dbReference type="RefSeq" id="XP_011522261.1">
    <molecule id="P46734-2"/>
    <property type="nucleotide sequence ID" value="XM_011523959.3"/>
</dbReference>
<dbReference type="RefSeq" id="XP_016880347.1">
    <property type="nucleotide sequence ID" value="XM_017024858.1"/>
</dbReference>
<dbReference type="RefSeq" id="XP_016880348.1">
    <molecule id="P46734-2"/>
    <property type="nucleotide sequence ID" value="XM_017024859.2"/>
</dbReference>
<dbReference type="RefSeq" id="XP_054172658.1">
    <molecule id="P46734-2"/>
    <property type="nucleotide sequence ID" value="XM_054316683.1"/>
</dbReference>
<dbReference type="RefSeq" id="XP_054172659.1">
    <molecule id="P46734-2"/>
    <property type="nucleotide sequence ID" value="XM_054316684.1"/>
</dbReference>
<dbReference type="SMR" id="P46734"/>
<dbReference type="BioGRID" id="111592">
    <property type="interactions" value="267"/>
</dbReference>
<dbReference type="CORUM" id="P46734"/>
<dbReference type="DIP" id="DIP-34242N"/>
<dbReference type="FunCoup" id="P46734">
    <property type="interactions" value="2228"/>
</dbReference>
<dbReference type="IntAct" id="P46734">
    <property type="interactions" value="116"/>
</dbReference>
<dbReference type="MINT" id="P46734"/>
<dbReference type="STRING" id="9606.ENSP00000345083"/>
<dbReference type="BindingDB" id="P46734"/>
<dbReference type="ChEMBL" id="CHEMBL2109"/>
<dbReference type="DrugBank" id="DB12010">
    <property type="generic name" value="Fostamatinib"/>
</dbReference>
<dbReference type="DrugBank" id="DB14904">
    <property type="generic name" value="Pimasertib"/>
</dbReference>
<dbReference type="DrugCentral" id="P46734"/>
<dbReference type="GuidetoPHARMACOLOGY" id="2064"/>
<dbReference type="GlyGen" id="P46734">
    <property type="glycosylation" value="2 sites, 1 O-linked glycan (1 site)"/>
</dbReference>
<dbReference type="iPTMnet" id="P46734"/>
<dbReference type="PhosphoSitePlus" id="P46734"/>
<dbReference type="BioMuta" id="MAP2K3"/>
<dbReference type="DMDM" id="24638466"/>
<dbReference type="CPTAC" id="CPTAC-814"/>
<dbReference type="CPTAC" id="CPTAC-815"/>
<dbReference type="jPOST" id="P46734"/>
<dbReference type="MassIVE" id="P46734"/>
<dbReference type="PaxDb" id="9606-ENSP00000345083"/>
<dbReference type="PeptideAtlas" id="P46734"/>
<dbReference type="ProteomicsDB" id="55750">
    <molecule id="P46734-1"/>
</dbReference>
<dbReference type="ProteomicsDB" id="55751">
    <molecule id="P46734-2"/>
</dbReference>
<dbReference type="ProteomicsDB" id="55752">
    <molecule id="P46734-3"/>
</dbReference>
<dbReference type="Pumba" id="P46734"/>
<dbReference type="Antibodypedia" id="4342">
    <property type="antibodies" value="1472 antibodies from 43 providers"/>
</dbReference>
<dbReference type="DNASU" id="5606"/>
<dbReference type="Ensembl" id="ENST00000316920.10">
    <molecule id="P46734-2"/>
    <property type="protein sequence ID" value="ENSP00000319139.6"/>
    <property type="gene ID" value="ENSG00000034152.20"/>
</dbReference>
<dbReference type="Ensembl" id="ENST00000342679.9">
    <molecule id="P46734-1"/>
    <property type="protein sequence ID" value="ENSP00000345083.4"/>
    <property type="gene ID" value="ENSG00000034152.20"/>
</dbReference>
<dbReference type="Ensembl" id="ENST00000361818.9">
    <molecule id="P46734-2"/>
    <property type="protein sequence ID" value="ENSP00000355081.5"/>
    <property type="gene ID" value="ENSG00000034152.20"/>
</dbReference>
<dbReference type="GeneID" id="5606"/>
<dbReference type="KEGG" id="hsa:5606"/>
<dbReference type="MANE-Select" id="ENST00000342679.9">
    <property type="protein sequence ID" value="ENSP00000345083.4"/>
    <property type="RefSeq nucleotide sequence ID" value="NM_145109.3"/>
    <property type="RefSeq protein sequence ID" value="NP_659731.1"/>
</dbReference>
<dbReference type="UCSC" id="uc021tsq.2">
    <molecule id="P46734-1"/>
    <property type="organism name" value="human"/>
</dbReference>
<dbReference type="AGR" id="HGNC:6843"/>
<dbReference type="CTD" id="5606"/>
<dbReference type="DisGeNET" id="5606"/>
<dbReference type="GeneCards" id="MAP2K3"/>
<dbReference type="HGNC" id="HGNC:6843">
    <property type="gene designation" value="MAP2K3"/>
</dbReference>
<dbReference type="HPA" id="ENSG00000034152">
    <property type="expression patterns" value="Tissue enhanced (bone)"/>
</dbReference>
<dbReference type="MalaCards" id="MAP2K3"/>
<dbReference type="MIM" id="602315">
    <property type="type" value="gene"/>
</dbReference>
<dbReference type="neXtProt" id="NX_P46734"/>
<dbReference type="OpenTargets" id="ENSG00000034152"/>
<dbReference type="PharmGKB" id="PA30588"/>
<dbReference type="VEuPathDB" id="HostDB:ENSG00000034152"/>
<dbReference type="eggNOG" id="KOG0984">
    <property type="taxonomic scope" value="Eukaryota"/>
</dbReference>
<dbReference type="GeneTree" id="ENSGT00940000160875"/>
<dbReference type="HOGENOM" id="CLU_000288_63_23_1"/>
<dbReference type="InParanoid" id="P46734"/>
<dbReference type="OMA" id="RISCVYK"/>
<dbReference type="OrthoDB" id="10252354at2759"/>
<dbReference type="PAN-GO" id="P46734">
    <property type="GO annotations" value="2 GO annotations based on evolutionary models"/>
</dbReference>
<dbReference type="PhylomeDB" id="P46734"/>
<dbReference type="TreeFam" id="TF350701"/>
<dbReference type="BRENDA" id="2.7.12.2">
    <property type="organism ID" value="2681"/>
</dbReference>
<dbReference type="PathwayCommons" id="P46734"/>
<dbReference type="Reactome" id="R-HSA-2559580">
    <property type="pathway name" value="Oxidative Stress Induced Senescence"/>
</dbReference>
<dbReference type="Reactome" id="R-HSA-450302">
    <property type="pathway name" value="activated TAK1 mediates p38 MAPK activation"/>
</dbReference>
<dbReference type="Reactome" id="R-HSA-5210891">
    <molecule id="P46734-3"/>
    <property type="pathway name" value="Uptake and function of anthrax toxins"/>
</dbReference>
<dbReference type="SignaLink" id="P46734"/>
<dbReference type="SIGNOR" id="P46734"/>
<dbReference type="BioGRID-ORCS" id="5606">
    <property type="hits" value="65 hits in 1214 CRISPR screens"/>
</dbReference>
<dbReference type="ChiTaRS" id="MAP2K3">
    <property type="organism name" value="human"/>
</dbReference>
<dbReference type="GeneWiki" id="MAP2K3"/>
<dbReference type="GenomeRNAi" id="5606"/>
<dbReference type="Pharos" id="P46734">
    <property type="development level" value="Tchem"/>
</dbReference>
<dbReference type="PRO" id="PR:P46734"/>
<dbReference type="Proteomes" id="UP000005640">
    <property type="component" value="Chromosome 17"/>
</dbReference>
<dbReference type="RNAct" id="P46734">
    <property type="molecule type" value="protein"/>
</dbReference>
<dbReference type="Bgee" id="ENSG00000034152">
    <property type="expression patterns" value="Expressed in buccal mucosa cell and 210 other cell types or tissues"/>
</dbReference>
<dbReference type="ExpressionAtlas" id="P46734">
    <property type="expression patterns" value="baseline and differential"/>
</dbReference>
<dbReference type="GO" id="GO:0005737">
    <property type="term" value="C:cytoplasm"/>
    <property type="evidence" value="ECO:0000304"/>
    <property type="project" value="UniProt"/>
</dbReference>
<dbReference type="GO" id="GO:0005829">
    <property type="term" value="C:cytosol"/>
    <property type="evidence" value="ECO:0000304"/>
    <property type="project" value="Reactome"/>
</dbReference>
<dbReference type="GO" id="GO:0016020">
    <property type="term" value="C:membrane"/>
    <property type="evidence" value="ECO:0007005"/>
    <property type="project" value="UniProtKB"/>
</dbReference>
<dbReference type="GO" id="GO:0005654">
    <property type="term" value="C:nucleoplasm"/>
    <property type="evidence" value="ECO:0000304"/>
    <property type="project" value="Reactome"/>
</dbReference>
<dbReference type="GO" id="GO:0005524">
    <property type="term" value="F:ATP binding"/>
    <property type="evidence" value="ECO:0007669"/>
    <property type="project" value="UniProtKB-KW"/>
</dbReference>
<dbReference type="GO" id="GO:0004708">
    <property type="term" value="F:MAP kinase kinase activity"/>
    <property type="evidence" value="ECO:0000314"/>
    <property type="project" value="UniProt"/>
</dbReference>
<dbReference type="GO" id="GO:0019901">
    <property type="term" value="F:protein kinase binding"/>
    <property type="evidence" value="ECO:0000353"/>
    <property type="project" value="UniProtKB"/>
</dbReference>
<dbReference type="GO" id="GO:0106310">
    <property type="term" value="F:protein serine kinase activity"/>
    <property type="evidence" value="ECO:0007669"/>
    <property type="project" value="RHEA"/>
</dbReference>
<dbReference type="GO" id="GO:0004674">
    <property type="term" value="F:protein serine/threonine kinase activity"/>
    <property type="evidence" value="ECO:0007669"/>
    <property type="project" value="UniProtKB-KW"/>
</dbReference>
<dbReference type="GO" id="GO:0004713">
    <property type="term" value="F:protein tyrosine kinase activity"/>
    <property type="evidence" value="ECO:0007669"/>
    <property type="project" value="UniProtKB-KW"/>
</dbReference>
<dbReference type="GO" id="GO:0060048">
    <property type="term" value="P:cardiac muscle contraction"/>
    <property type="evidence" value="ECO:0007669"/>
    <property type="project" value="Ensembl"/>
</dbReference>
<dbReference type="GO" id="GO:0071222">
    <property type="term" value="P:cellular response to lipopolysaccharide"/>
    <property type="evidence" value="ECO:0007669"/>
    <property type="project" value="Ensembl"/>
</dbReference>
<dbReference type="GO" id="GO:0072709">
    <property type="term" value="P:cellular response to sorbitol"/>
    <property type="evidence" value="ECO:0007669"/>
    <property type="project" value="Ensembl"/>
</dbReference>
<dbReference type="GO" id="GO:0035924">
    <property type="term" value="P:cellular response to vascular endothelial growth factor stimulus"/>
    <property type="evidence" value="ECO:0000315"/>
    <property type="project" value="BHF-UCL"/>
</dbReference>
<dbReference type="GO" id="GO:0090398">
    <property type="term" value="P:cellular senescence"/>
    <property type="evidence" value="ECO:0000304"/>
    <property type="project" value="Reactome"/>
</dbReference>
<dbReference type="GO" id="GO:0007507">
    <property type="term" value="P:heart development"/>
    <property type="evidence" value="ECO:0007669"/>
    <property type="project" value="Ensembl"/>
</dbReference>
<dbReference type="GO" id="GO:0006954">
    <property type="term" value="P:inflammatory response"/>
    <property type="evidence" value="ECO:0007669"/>
    <property type="project" value="Ensembl"/>
</dbReference>
<dbReference type="GO" id="GO:0000165">
    <property type="term" value="P:MAPK cascade"/>
    <property type="evidence" value="ECO:0000318"/>
    <property type="project" value="GO_Central"/>
</dbReference>
<dbReference type="GO" id="GO:0035331">
    <property type="term" value="P:negative regulation of hippo signaling"/>
    <property type="evidence" value="ECO:0000315"/>
    <property type="project" value="FlyBase"/>
</dbReference>
<dbReference type="GO" id="GO:0038066">
    <property type="term" value="P:p38MAPK cascade"/>
    <property type="evidence" value="ECO:0000315"/>
    <property type="project" value="BHF-UCL"/>
</dbReference>
<dbReference type="GO" id="GO:0043536">
    <property type="term" value="P:positive regulation of blood vessel endothelial cell migration"/>
    <property type="evidence" value="ECO:0000315"/>
    <property type="project" value="BHF-UCL"/>
</dbReference>
<dbReference type="GO" id="GO:0045893">
    <property type="term" value="P:positive regulation of DNA-templated transcription"/>
    <property type="evidence" value="ECO:0000314"/>
    <property type="project" value="UniProtKB"/>
</dbReference>
<dbReference type="GO" id="GO:0043410">
    <property type="term" value="P:positive regulation of MAPK cascade"/>
    <property type="evidence" value="ECO:0007669"/>
    <property type="project" value="Ensembl"/>
</dbReference>
<dbReference type="GO" id="GO:0045860">
    <property type="term" value="P:positive regulation of protein kinase activity"/>
    <property type="evidence" value="ECO:0000314"/>
    <property type="project" value="UniProtKB"/>
</dbReference>
<dbReference type="GO" id="GO:0001817">
    <property type="term" value="P:regulation of cytokine production"/>
    <property type="evidence" value="ECO:0007669"/>
    <property type="project" value="Ensembl"/>
</dbReference>
<dbReference type="GO" id="GO:0002931">
    <property type="term" value="P:response to ischemia"/>
    <property type="evidence" value="ECO:0007669"/>
    <property type="project" value="Ensembl"/>
</dbReference>
<dbReference type="GO" id="GO:0007165">
    <property type="term" value="P:signal transduction"/>
    <property type="evidence" value="ECO:0000304"/>
    <property type="project" value="ProtInc"/>
</dbReference>
<dbReference type="GO" id="GO:0031098">
    <property type="term" value="P:stress-activated protein kinase signaling cascade"/>
    <property type="evidence" value="ECO:0000314"/>
    <property type="project" value="UniProt"/>
</dbReference>
<dbReference type="CDD" id="cd06617">
    <property type="entry name" value="PKc_MKK3_6"/>
    <property type="match status" value="1"/>
</dbReference>
<dbReference type="FunFam" id="3.30.200.20:FF:000040">
    <property type="entry name" value="Dual specificity mitogen-activated protein kinase kinase"/>
    <property type="match status" value="1"/>
</dbReference>
<dbReference type="FunFam" id="1.10.510.10:FF:000158">
    <property type="entry name" value="Dual specificity mitogen-activated protein kinase kinase 6"/>
    <property type="match status" value="1"/>
</dbReference>
<dbReference type="Gene3D" id="3.30.200.20">
    <property type="entry name" value="Phosphorylase Kinase, domain 1"/>
    <property type="match status" value="1"/>
</dbReference>
<dbReference type="Gene3D" id="1.10.510.10">
    <property type="entry name" value="Transferase(Phosphotransferase) domain 1"/>
    <property type="match status" value="1"/>
</dbReference>
<dbReference type="InterPro" id="IPR011009">
    <property type="entry name" value="Kinase-like_dom_sf"/>
</dbReference>
<dbReference type="InterPro" id="IPR000719">
    <property type="entry name" value="Prot_kinase_dom"/>
</dbReference>
<dbReference type="InterPro" id="IPR017441">
    <property type="entry name" value="Protein_kinase_ATP_BS"/>
</dbReference>
<dbReference type="InterPro" id="IPR008271">
    <property type="entry name" value="Ser/Thr_kinase_AS"/>
</dbReference>
<dbReference type="PANTHER" id="PTHR48013:SF21">
    <property type="entry name" value="DUAL SPECIFICITY MITOGEN-ACTIVATED PROTEIN KINASE KINASE 3"/>
    <property type="match status" value="1"/>
</dbReference>
<dbReference type="PANTHER" id="PTHR48013">
    <property type="entry name" value="DUAL SPECIFICITY MITOGEN-ACTIVATED PROTEIN KINASE KINASE 5-RELATED"/>
    <property type="match status" value="1"/>
</dbReference>
<dbReference type="Pfam" id="PF00069">
    <property type="entry name" value="Pkinase"/>
    <property type="match status" value="1"/>
</dbReference>
<dbReference type="SMART" id="SM00220">
    <property type="entry name" value="S_TKc"/>
    <property type="match status" value="1"/>
</dbReference>
<dbReference type="SUPFAM" id="SSF56112">
    <property type="entry name" value="Protein kinase-like (PK-like)"/>
    <property type="match status" value="1"/>
</dbReference>
<dbReference type="PROSITE" id="PS00107">
    <property type="entry name" value="PROTEIN_KINASE_ATP"/>
    <property type="match status" value="1"/>
</dbReference>
<dbReference type="PROSITE" id="PS50011">
    <property type="entry name" value="PROTEIN_KINASE_DOM"/>
    <property type="match status" value="1"/>
</dbReference>
<dbReference type="PROSITE" id="PS00108">
    <property type="entry name" value="PROTEIN_KINASE_ST"/>
    <property type="match status" value="1"/>
</dbReference>
<reference key="1">
    <citation type="journal article" date="1995" name="Science">
        <title>Independent human MAP-kinase signal transduction pathways defined by MEK and MKK isoforms.</title>
        <authorList>
            <person name="Derijard B."/>
            <person name="Raingeaud J."/>
            <person name="Barrett T."/>
            <person name="Wu I.-H."/>
            <person name="Han J."/>
            <person name="Ulevitch R.J."/>
            <person name="Davis R.J."/>
        </authorList>
    </citation>
    <scope>NUCLEOTIDE SEQUENCE [MRNA] (ISOFORM 1)</scope>
    <source>
        <tissue>Brain</tissue>
    </source>
</reference>
<reference key="2">
    <citation type="journal article" date="1996" name="J. Biol. Chem.">
        <title>Purification and identification of a major activator for p38 from osmotically shocked cells: activation of mitogen-activated protein kinase kinase 6 by osmotic shock, tumor necrosis factor-alpha, and H2O2.</title>
        <authorList>
            <person name="Moriguchi T."/>
            <person name="Toyoshima F."/>
            <person name="Gotoh Y."/>
            <person name="Iwamatsu A."/>
            <person name="Irie K."/>
            <person name="Mori E."/>
            <person name="Kuroyanagi N."/>
            <person name="Hagiwara M."/>
            <person name="Matsumoto K."/>
            <person name="Nishida E."/>
        </authorList>
    </citation>
    <scope>NUCLEOTIDE SEQUENCE [MRNA] (ISOFORM 3)</scope>
</reference>
<reference key="3">
    <citation type="submission" date="1996-08" db="EMBL/GenBank/DDBJ databases">
        <authorList>
            <person name="Han J."/>
        </authorList>
    </citation>
    <scope>NUCLEOTIDE SEQUENCE (ISOFORMS 2 AND 3)</scope>
</reference>
<reference key="4">
    <citation type="journal article" date="2004" name="Nat. Genet.">
        <title>Complete sequencing and characterization of 21,243 full-length human cDNAs.</title>
        <authorList>
            <person name="Ota T."/>
            <person name="Suzuki Y."/>
            <person name="Nishikawa T."/>
            <person name="Otsuki T."/>
            <person name="Sugiyama T."/>
            <person name="Irie R."/>
            <person name="Wakamatsu A."/>
            <person name="Hayashi K."/>
            <person name="Sato H."/>
            <person name="Nagai K."/>
            <person name="Kimura K."/>
            <person name="Makita H."/>
            <person name="Sekine M."/>
            <person name="Obayashi M."/>
            <person name="Nishi T."/>
            <person name="Shibahara T."/>
            <person name="Tanaka T."/>
            <person name="Ishii S."/>
            <person name="Yamamoto J."/>
            <person name="Saito K."/>
            <person name="Kawai Y."/>
            <person name="Isono Y."/>
            <person name="Nakamura Y."/>
            <person name="Nagahari K."/>
            <person name="Murakami K."/>
            <person name="Yasuda T."/>
            <person name="Iwayanagi T."/>
            <person name="Wagatsuma M."/>
            <person name="Shiratori A."/>
            <person name="Sudo H."/>
            <person name="Hosoiri T."/>
            <person name="Kaku Y."/>
            <person name="Kodaira H."/>
            <person name="Kondo H."/>
            <person name="Sugawara M."/>
            <person name="Takahashi M."/>
            <person name="Kanda K."/>
            <person name="Yokoi T."/>
            <person name="Furuya T."/>
            <person name="Kikkawa E."/>
            <person name="Omura Y."/>
            <person name="Abe K."/>
            <person name="Kamihara K."/>
            <person name="Katsuta N."/>
            <person name="Sato K."/>
            <person name="Tanikawa M."/>
            <person name="Yamazaki M."/>
            <person name="Ninomiya K."/>
            <person name="Ishibashi T."/>
            <person name="Yamashita H."/>
            <person name="Murakawa K."/>
            <person name="Fujimori K."/>
            <person name="Tanai H."/>
            <person name="Kimata M."/>
            <person name="Watanabe M."/>
            <person name="Hiraoka S."/>
            <person name="Chiba Y."/>
            <person name="Ishida S."/>
            <person name="Ono Y."/>
            <person name="Takiguchi S."/>
            <person name="Watanabe S."/>
            <person name="Yosida M."/>
            <person name="Hotuta T."/>
            <person name="Kusano J."/>
            <person name="Kanehori K."/>
            <person name="Takahashi-Fujii A."/>
            <person name="Hara H."/>
            <person name="Tanase T.-O."/>
            <person name="Nomura Y."/>
            <person name="Togiya S."/>
            <person name="Komai F."/>
            <person name="Hara R."/>
            <person name="Takeuchi K."/>
            <person name="Arita M."/>
            <person name="Imose N."/>
            <person name="Musashino K."/>
            <person name="Yuuki H."/>
            <person name="Oshima A."/>
            <person name="Sasaki N."/>
            <person name="Aotsuka S."/>
            <person name="Yoshikawa Y."/>
            <person name="Matsunawa H."/>
            <person name="Ichihara T."/>
            <person name="Shiohata N."/>
            <person name="Sano S."/>
            <person name="Moriya S."/>
            <person name="Momiyama H."/>
            <person name="Satoh N."/>
            <person name="Takami S."/>
            <person name="Terashima Y."/>
            <person name="Suzuki O."/>
            <person name="Nakagawa S."/>
            <person name="Senoh A."/>
            <person name="Mizoguchi H."/>
            <person name="Goto Y."/>
            <person name="Shimizu F."/>
            <person name="Wakebe H."/>
            <person name="Hishigaki H."/>
            <person name="Watanabe T."/>
            <person name="Sugiyama A."/>
            <person name="Takemoto M."/>
            <person name="Kawakami B."/>
            <person name="Yamazaki M."/>
            <person name="Watanabe K."/>
            <person name="Kumagai A."/>
            <person name="Itakura S."/>
            <person name="Fukuzumi Y."/>
            <person name="Fujimori Y."/>
            <person name="Komiyama M."/>
            <person name="Tashiro H."/>
            <person name="Tanigami A."/>
            <person name="Fujiwara T."/>
            <person name="Ono T."/>
            <person name="Yamada K."/>
            <person name="Fujii Y."/>
            <person name="Ozaki K."/>
            <person name="Hirao M."/>
            <person name="Ohmori Y."/>
            <person name="Kawabata A."/>
            <person name="Hikiji T."/>
            <person name="Kobatake N."/>
            <person name="Inagaki H."/>
            <person name="Ikema Y."/>
            <person name="Okamoto S."/>
            <person name="Okitani R."/>
            <person name="Kawakami T."/>
            <person name="Noguchi S."/>
            <person name="Itoh T."/>
            <person name="Shigeta K."/>
            <person name="Senba T."/>
            <person name="Matsumura K."/>
            <person name="Nakajima Y."/>
            <person name="Mizuno T."/>
            <person name="Morinaga M."/>
            <person name="Sasaki M."/>
            <person name="Togashi T."/>
            <person name="Oyama M."/>
            <person name="Hata H."/>
            <person name="Watanabe M."/>
            <person name="Komatsu T."/>
            <person name="Mizushima-Sugano J."/>
            <person name="Satoh T."/>
            <person name="Shirai Y."/>
            <person name="Takahashi Y."/>
            <person name="Nakagawa K."/>
            <person name="Okumura K."/>
            <person name="Nagase T."/>
            <person name="Nomura N."/>
            <person name="Kikuchi H."/>
            <person name="Masuho Y."/>
            <person name="Yamashita R."/>
            <person name="Nakai K."/>
            <person name="Yada T."/>
            <person name="Nakamura Y."/>
            <person name="Ohara O."/>
            <person name="Isogai T."/>
            <person name="Sugano S."/>
        </authorList>
    </citation>
    <scope>NUCLEOTIDE SEQUENCE [LARGE SCALE MRNA] (ISOFORM 1)</scope>
    <source>
        <tissue>Trachea</tissue>
    </source>
</reference>
<reference key="5">
    <citation type="journal article" date="2004" name="Genome Res.">
        <title>The status, quality, and expansion of the NIH full-length cDNA project: the Mammalian Gene Collection (MGC).</title>
        <authorList>
            <consortium name="The MGC Project Team"/>
        </authorList>
    </citation>
    <scope>NUCLEOTIDE SEQUENCE [LARGE SCALE MRNA] (ISOFORM 3)</scope>
    <source>
        <tissue>Leukocyte</tissue>
    </source>
</reference>
<reference key="6">
    <citation type="journal article" date="1996" name="Mol. Cell. Biol.">
        <title>MKK3- and MKK6-regulated gene expression is mediated by the p38 mitogen-activated protein kinase signal transduction pathway.</title>
        <authorList>
            <person name="Raingeaud J."/>
            <person name="Whitmarsh A.J."/>
            <person name="Barrett T."/>
            <person name="Derijard B."/>
            <person name="Davis R.J."/>
        </authorList>
    </citation>
    <scope>PHOSPHORYLATION AT SER-218 AND THR-222</scope>
    <scope>MUTAGENESIS OF SER-218 AND THR-222</scope>
    <scope>CATALYTIC ACTIVITY</scope>
    <scope>FUNCTION</scope>
</reference>
<reference key="7">
    <citation type="journal article" date="2001" name="J. Biol. Chem.">
        <title>Regulation of stress-responsive mitogen-activated protein (MAP) kinase pathways by TAO2.</title>
        <authorList>
            <person name="Chen Z."/>
            <person name="Cobb M.H."/>
        </authorList>
    </citation>
    <scope>PHOSPHORYLATION BY TAOK2</scope>
</reference>
<reference key="8">
    <citation type="journal article" date="2002" name="J. Biol. Chem.">
        <title>Mirk protein kinase is activated by MKK3 and functions as a transcriptional activator of HNF1alpha.</title>
        <authorList>
            <person name="Lim S."/>
            <person name="Jin K."/>
            <person name="Friedman E."/>
        </authorList>
    </citation>
    <scope>INTERACTION WITH DYRK1B</scope>
    <source>
        <tissue>Muscle</tissue>
    </source>
</reference>
<reference key="9">
    <citation type="journal article" date="2006" name="J. Immunol.">
        <title>Platelet-activating factor-induced clathrin-mediated endocytosis requires beta-arrestin-1 recruitment and activation of the p38 MAPK signalosome at the plasma membrane for actin bundle formation.</title>
        <authorList>
            <person name="McLaughlin N.J."/>
            <person name="Banerjee A."/>
            <person name="Kelher M.R."/>
            <person name="Gamboni-Robertson F."/>
            <person name="Hamiel C."/>
            <person name="Sheppard F.R."/>
            <person name="Moore E.E."/>
            <person name="Silliman C.C."/>
        </authorList>
    </citation>
    <scope>INTERACTION WITH ARRB1</scope>
</reference>
<reference key="10">
    <citation type="journal article" date="2006" name="Science">
        <title>Yersinia YopJ acetylates and inhibits kinase activation by blocking phosphorylation.</title>
        <authorList>
            <person name="Mukherjee S."/>
            <person name="Keitany G."/>
            <person name="Li Y."/>
            <person name="Wang Y."/>
            <person name="Ball H.L."/>
            <person name="Goldsmith E.J."/>
            <person name="Orth K."/>
        </authorList>
    </citation>
    <scope>INTERACTION WITH YOPJ (MICROBIAL INFECTION)</scope>
    <scope>ACETYLATION (MICROBIAL INFECTION)</scope>
</reference>
<reference key="11">
    <citation type="journal article" date="2009" name="Anal. Chem.">
        <title>Lys-N and trypsin cover complementary parts of the phosphoproteome in a refined SCX-based approach.</title>
        <authorList>
            <person name="Gauci S."/>
            <person name="Helbig A.O."/>
            <person name="Slijper M."/>
            <person name="Krijgsveld J."/>
            <person name="Heck A.J."/>
            <person name="Mohammed S."/>
        </authorList>
    </citation>
    <scope>ACETYLATION [LARGE SCALE ANALYSIS] AT MET-1</scope>
    <scope>IDENTIFICATION BY MASS SPECTROMETRY [LARGE SCALE ANALYSIS]</scope>
</reference>
<reference key="12">
    <citation type="journal article" date="2010" name="Sci. Signal.">
        <title>Quantitative phosphoproteomics reveals widespread full phosphorylation site occupancy during mitosis.</title>
        <authorList>
            <person name="Olsen J.V."/>
            <person name="Vermeulen M."/>
            <person name="Santamaria A."/>
            <person name="Kumar C."/>
            <person name="Miller M.L."/>
            <person name="Jensen L.J."/>
            <person name="Gnad F."/>
            <person name="Cox J."/>
            <person name="Jensen T.S."/>
            <person name="Nigg E.A."/>
            <person name="Brunak S."/>
            <person name="Mann M."/>
        </authorList>
    </citation>
    <scope>ACETYLATION [LARGE SCALE ANALYSIS] AT MET-1</scope>
    <scope>PHOSPHORYLATION [LARGE SCALE ANALYSIS] AT SER-3 AND SER-15</scope>
    <scope>IDENTIFICATION BY MASS SPECTROMETRY [LARGE SCALE ANALYSIS]</scope>
    <source>
        <tissue>Cervix carcinoma</tissue>
    </source>
</reference>
<reference key="13">
    <citation type="journal article" date="2011" name="BMC Syst. Biol.">
        <title>Initial characterization of the human central proteome.</title>
        <authorList>
            <person name="Burkard T.R."/>
            <person name="Planyavsky M."/>
            <person name="Kaupe I."/>
            <person name="Breitwieser F.P."/>
            <person name="Buerckstuemmer T."/>
            <person name="Bennett K.L."/>
            <person name="Superti-Furga G."/>
            <person name="Colinge J."/>
        </authorList>
    </citation>
    <scope>IDENTIFICATION BY MASS SPECTROMETRY [LARGE SCALE ANALYSIS]</scope>
</reference>
<reference key="14">
    <citation type="journal article" date="2011" name="J. Biol. Chem.">
        <title>A-kinase anchoring protein (AKAP)-Lbc anchors a PKN-based signaling complex involved in alpha1-adrenergic receptor-induced p38 activation.</title>
        <authorList>
            <person name="Cariolato L."/>
            <person name="Cavin S."/>
            <person name="Diviani D."/>
        </authorList>
    </citation>
    <scope>FUNCTION</scope>
    <scope>IDENTIFICATION IN A COMPLEX WITH AKAP13; PKN1; MAPK14; ZAK AND MAP2K3</scope>
</reference>
<reference key="15">
    <citation type="journal article" date="2012" name="Proc. Natl. Acad. Sci. U.S.A.">
        <title>N-terminal acetylome analyses and functional insights of the N-terminal acetyltransferase NatB.</title>
        <authorList>
            <person name="Van Damme P."/>
            <person name="Lasa M."/>
            <person name="Polevoda B."/>
            <person name="Gazquez C."/>
            <person name="Elosegui-Artola A."/>
            <person name="Kim D.S."/>
            <person name="De Juan-Pardo E."/>
            <person name="Demeyer K."/>
            <person name="Hole K."/>
            <person name="Larrea E."/>
            <person name="Timmerman E."/>
            <person name="Prieto J."/>
            <person name="Arnesen T."/>
            <person name="Sherman F."/>
            <person name="Gevaert K."/>
            <person name="Aldabe R."/>
        </authorList>
    </citation>
    <scope>ACETYLATION [LARGE SCALE ANALYSIS] AT MET-1</scope>
    <scope>IDENTIFICATION BY MASS SPECTROMETRY [LARGE SCALE ANALYSIS]</scope>
</reference>
<reference key="16">
    <citation type="journal article" date="2001" name="Genomics">
        <title>Mutation analyses of 268 candidate genes in human tumor cell lines.</title>
        <authorList>
            <person name="Teng D.-H."/>
            <person name="Chen Y."/>
            <person name="Lian L."/>
            <person name="Ha P.C."/>
            <person name="Tavtigian S.V."/>
            <person name="Wong A.K.C."/>
        </authorList>
    </citation>
    <scope>VARIANTS COLON CANCER TRP-175 AND VAL-215</scope>
</reference>
<reference key="17">
    <citation type="journal article" date="2007" name="Nature">
        <title>Patterns of somatic mutation in human cancer genomes.</title>
        <authorList>
            <person name="Greenman C."/>
            <person name="Stephens P."/>
            <person name="Smith R."/>
            <person name="Dalgliesh G.L."/>
            <person name="Hunter C."/>
            <person name="Bignell G."/>
            <person name="Davies H."/>
            <person name="Teague J."/>
            <person name="Butler A."/>
            <person name="Stevens C."/>
            <person name="Edkins S."/>
            <person name="O'Meara S."/>
            <person name="Vastrik I."/>
            <person name="Schmidt E.E."/>
            <person name="Avis T."/>
            <person name="Barthorpe S."/>
            <person name="Bhamra G."/>
            <person name="Buck G."/>
            <person name="Choudhury B."/>
            <person name="Clements J."/>
            <person name="Cole J."/>
            <person name="Dicks E."/>
            <person name="Forbes S."/>
            <person name="Gray K."/>
            <person name="Halliday K."/>
            <person name="Harrison R."/>
            <person name="Hills K."/>
            <person name="Hinton J."/>
            <person name="Jenkinson A."/>
            <person name="Jones D."/>
            <person name="Menzies A."/>
            <person name="Mironenko T."/>
            <person name="Perry J."/>
            <person name="Raine K."/>
            <person name="Richardson D."/>
            <person name="Shepherd R."/>
            <person name="Small A."/>
            <person name="Tofts C."/>
            <person name="Varian J."/>
            <person name="Webb T."/>
            <person name="West S."/>
            <person name="Widaa S."/>
            <person name="Yates A."/>
            <person name="Cahill D.P."/>
            <person name="Louis D.N."/>
            <person name="Goldstraw P."/>
            <person name="Nicholson A.G."/>
            <person name="Brasseur F."/>
            <person name="Looijenga L."/>
            <person name="Weber B.L."/>
            <person name="Chiew Y.-E."/>
            <person name="DeFazio A."/>
            <person name="Greaves M.F."/>
            <person name="Green A.R."/>
            <person name="Campbell P."/>
            <person name="Birney E."/>
            <person name="Easton D.F."/>
            <person name="Chenevix-Trench G."/>
            <person name="Tan M.-H."/>
            <person name="Khoo S.K."/>
            <person name="Teh B.T."/>
            <person name="Yuen S.T."/>
            <person name="Leung S.Y."/>
            <person name="Wooster R."/>
            <person name="Futreal P.A."/>
            <person name="Stratton M.R."/>
        </authorList>
    </citation>
    <scope>VARIANTS [LARGE SCALE ANALYSIS] THR-26; PRO-68; THR-84; ILE-90; LEU-94; TRP-96; HIS-293 AND MET-339</scope>
</reference>
<evidence type="ECO:0000250" key="1">
    <source>
        <dbReference type="UniProtKB" id="O09110"/>
    </source>
</evidence>
<evidence type="ECO:0000255" key="2">
    <source>
        <dbReference type="PROSITE-ProRule" id="PRU00159"/>
    </source>
</evidence>
<evidence type="ECO:0000255" key="3">
    <source>
        <dbReference type="PROSITE-ProRule" id="PRU10027"/>
    </source>
</evidence>
<evidence type="ECO:0000256" key="4">
    <source>
        <dbReference type="SAM" id="MobiDB-lite"/>
    </source>
</evidence>
<evidence type="ECO:0000269" key="5">
    <source>
    </source>
</evidence>
<evidence type="ECO:0000269" key="6">
    <source>
    </source>
</evidence>
<evidence type="ECO:0000269" key="7">
    <source>
    </source>
</evidence>
<evidence type="ECO:0000269" key="8">
    <source>
    </source>
</evidence>
<evidence type="ECO:0000269" key="9">
    <source>
    </source>
</evidence>
<evidence type="ECO:0000269" key="10">
    <source>
    </source>
</evidence>
<evidence type="ECO:0000269" key="11">
    <source>
    </source>
</evidence>
<evidence type="ECO:0000269" key="12">
    <source>
    </source>
</evidence>
<evidence type="ECO:0000303" key="13">
    <source>
    </source>
</evidence>
<evidence type="ECO:0000303" key="14">
    <source>
    </source>
</evidence>
<evidence type="ECO:0000305" key="15"/>
<evidence type="ECO:0007744" key="16">
    <source>
    </source>
</evidence>
<evidence type="ECO:0007744" key="17">
    <source>
    </source>
</evidence>
<evidence type="ECO:0007744" key="18">
    <source>
    </source>
</evidence>
<comment type="function">
    <text evidence="11 12">Dual specificity kinase. Is activated by cytokines and environmental stress in vivo. Catalyzes the concomitant phosphorylation of a threonine and a tyrosine residue in the MAP kinase p38. Part of a signaling cascade that begins with the activation of the adrenergic receptor ADRA1B and leads to the activation of MAPK14.</text>
</comment>
<comment type="catalytic activity">
    <reaction evidence="12">
        <text>L-seryl-[protein] + ATP = O-phospho-L-seryl-[protein] + ADP + H(+)</text>
        <dbReference type="Rhea" id="RHEA:17989"/>
        <dbReference type="Rhea" id="RHEA-COMP:9863"/>
        <dbReference type="Rhea" id="RHEA-COMP:11604"/>
        <dbReference type="ChEBI" id="CHEBI:15378"/>
        <dbReference type="ChEBI" id="CHEBI:29999"/>
        <dbReference type="ChEBI" id="CHEBI:30616"/>
        <dbReference type="ChEBI" id="CHEBI:83421"/>
        <dbReference type="ChEBI" id="CHEBI:456216"/>
        <dbReference type="EC" id="2.7.12.2"/>
    </reaction>
</comment>
<comment type="catalytic activity">
    <reaction evidence="12">
        <text>L-threonyl-[protein] + ATP = O-phospho-L-threonyl-[protein] + ADP + H(+)</text>
        <dbReference type="Rhea" id="RHEA:46608"/>
        <dbReference type="Rhea" id="RHEA-COMP:11060"/>
        <dbReference type="Rhea" id="RHEA-COMP:11605"/>
        <dbReference type="ChEBI" id="CHEBI:15378"/>
        <dbReference type="ChEBI" id="CHEBI:30013"/>
        <dbReference type="ChEBI" id="CHEBI:30616"/>
        <dbReference type="ChEBI" id="CHEBI:61977"/>
        <dbReference type="ChEBI" id="CHEBI:456216"/>
        <dbReference type="EC" id="2.7.12.2"/>
    </reaction>
</comment>
<comment type="catalytic activity">
    <reaction evidence="12">
        <text>L-tyrosyl-[protein] + ATP = O-phospho-L-tyrosyl-[protein] + ADP + H(+)</text>
        <dbReference type="Rhea" id="RHEA:10596"/>
        <dbReference type="Rhea" id="RHEA-COMP:10136"/>
        <dbReference type="Rhea" id="RHEA-COMP:20101"/>
        <dbReference type="ChEBI" id="CHEBI:15378"/>
        <dbReference type="ChEBI" id="CHEBI:30616"/>
        <dbReference type="ChEBI" id="CHEBI:46858"/>
        <dbReference type="ChEBI" id="CHEBI:61978"/>
        <dbReference type="ChEBI" id="CHEBI:456216"/>
        <dbReference type="EC" id="2.7.12.2"/>
    </reaction>
</comment>
<comment type="activity regulation">
    <text evidence="12">Activated by dual phosphorylation on Ser-218 and Thr-222.</text>
</comment>
<comment type="subunit">
    <text evidence="1 7 8 11">Component of a signaling complex containing at least AKAP13, PKN1, MAPK14, ZAK and MAP2K3. Within this complex, AKAP13 interacts directly with PKN1, which in turn recruits MAPK14, MAP2K3 and ZAK (PubMed:21224381). Binds to DYRK1B/MIRK and increases its kinase activity (PubMed:11980910). Part of a complex with MAP3K3, RAC1 and CCM2 (By similarity). Interacts with ARRB1 (PubMed:16709866).</text>
</comment>
<comment type="subunit">
    <text evidence="9">(Microbial infection) Interacts with Yersinia YopJ.</text>
</comment>
<comment type="interaction">
    <interactant intactId="EBI-602462">
        <id>P46734</id>
    </interactant>
    <interactant intactId="EBI-634187">
        <id>Q9Y463</id>
        <label>DYRK1B</label>
    </interactant>
    <organismsDiffer>false</organismsDiffer>
    <experiments>2</experiments>
</comment>
<comment type="interaction">
    <interactant intactId="EBI-602462">
        <id>P46734</id>
    </interactant>
    <interactant intactId="EBI-5323863">
        <id>Q5S007</id>
        <label>LRRK2</label>
    </interactant>
    <organismsDiffer>false</organismsDiffer>
    <experiments>5</experiments>
</comment>
<comment type="interaction">
    <interactant intactId="EBI-602462">
        <id>P46734</id>
    </interactant>
    <interactant intactId="EBI-476263">
        <id>Q99683</id>
        <label>MAP3K5</label>
    </interactant>
    <organismsDiffer>false</organismsDiffer>
    <experiments>6</experiments>
</comment>
<comment type="interaction">
    <interactant intactId="EBI-602462">
        <id>P46734</id>
    </interactant>
    <interactant intactId="EBI-73946">
        <id>Q16539</id>
        <label>MAPK14</label>
    </interactant>
    <organismsDiffer>false</organismsDiffer>
    <experiments>7</experiments>
</comment>
<comment type="interaction">
    <interactant intactId="EBI-602462">
        <id>P46734</id>
    </interactant>
    <interactant intactId="EBI-717399">
        <id>Q9BSI4</id>
        <label>TINF2</label>
    </interactant>
    <organismsDiffer>false</organismsDiffer>
    <experiments>2</experiments>
</comment>
<comment type="alternative products">
    <event type="alternative splicing"/>
    <isoform>
        <id>P46734-1</id>
        <name>3</name>
        <name>3b</name>
        <sequence type="displayed"/>
    </isoform>
    <isoform>
        <id>P46734-2</id>
        <name>1</name>
        <sequence type="described" ref="VSP_004878"/>
    </isoform>
    <isoform>
        <id>P46734-3</id>
        <name>2</name>
        <name>3c</name>
        <sequence type="described" ref="VSP_004877"/>
    </isoform>
</comment>
<comment type="tissue specificity">
    <text>Abundant expression is seen in the skeletal muscle. It is also widely expressed in other tissues.</text>
</comment>
<comment type="PTM">
    <text evidence="5 12">Autophosphorylated. Phosphorylation on Ser-218 and Thr-222 by MAP kinase kinase kinases positively regulates the kinase activity (PubMed:8622669). Phosphorylated by TAOK2 (PubMed:11279118).</text>
</comment>
<comment type="PTM">
    <text evidence="9">(Microbial infection) Yersinia YopJ may acetylate Ser/Thr residues, preventing phosphorylation and activation, thus blocking the MAPK signaling pathway.</text>
</comment>
<comment type="disease">
    <text>Defects in MAP2K3 may be involved in colon cancer.</text>
</comment>
<comment type="similarity">
    <text evidence="15">Belongs to the protein kinase superfamily. STE Ser/Thr protein kinase family. MAP kinase kinase subfamily.</text>
</comment>
<accession>P46734</accession>
<accession>B3KSK7</accession>
<accession>Q99441</accession>
<accession>Q9UE71</accession>
<accession>Q9UE72</accession>
<protein>
    <recommendedName>
        <fullName>Dual specificity mitogen-activated protein kinase kinase 3</fullName>
        <shortName>MAP kinase kinase 3</shortName>
        <shortName>MAPKK 3</shortName>
        <ecNumber evidence="12">2.7.12.2</ecNumber>
    </recommendedName>
    <alternativeName>
        <fullName>MAPK/ERK kinase 3</fullName>
        <shortName>MEK 3</shortName>
    </alternativeName>
    <alternativeName>
        <fullName>Stress-activated protein kinase kinase 2</fullName>
        <shortName>SAPK kinase 2</shortName>
        <shortName>SAPKK-2</shortName>
        <shortName>SAPKK2</shortName>
    </alternativeName>
</protein>
<proteinExistence type="evidence at protein level"/>
<name>MP2K3_HUMAN</name>
<sequence>MESPASSQPASMPQSKGKSKRKKDLRISCMSKPPAPNPTPPRNLDSRTFITIGDRNFEVEADDLVTISELGRGAYGVVEKVRHAQSGTIMAVKRIRATVNSQEQKRLLMDLDINMRTVDCFYTVTFYGALFREGDVWICMELMDTSLDKFYRKVLDKNMTIPEDILGEIAVSIVRALEHLHSKLSVIHRDVKPSNVLINKEGHVKMCDFGISGYLVDSVAKTMDAGCKPYMAPERINPELNQKGYNVKSDVWSLGITMIEMAILRFPYESWGTPFQQLKQVVEEPSPQLPADRFSPEFVDFTAQCLRKNPAERMSYLELMEHPFFTLHKTKKTDIAAFVKEILGEDS</sequence>
<feature type="chain" id="PRO_0000086378" description="Dual specificity mitogen-activated protein kinase kinase 3">
    <location>
        <begin position="1"/>
        <end position="347"/>
    </location>
</feature>
<feature type="domain" description="Protein kinase" evidence="2">
    <location>
        <begin position="64"/>
        <end position="325"/>
    </location>
</feature>
<feature type="region of interest" description="Disordered" evidence="4">
    <location>
        <begin position="1"/>
        <end position="46"/>
    </location>
</feature>
<feature type="compositionally biased region" description="Low complexity" evidence="4">
    <location>
        <begin position="1"/>
        <end position="15"/>
    </location>
</feature>
<feature type="active site" description="Proton acceptor" evidence="2 3">
    <location>
        <position position="190"/>
    </location>
</feature>
<feature type="binding site" evidence="2">
    <location>
        <begin position="70"/>
        <end position="78"/>
    </location>
    <ligand>
        <name>ATP</name>
        <dbReference type="ChEBI" id="CHEBI:30616"/>
    </ligand>
</feature>
<feature type="binding site" evidence="2">
    <location>
        <position position="93"/>
    </location>
    <ligand>
        <name>ATP</name>
        <dbReference type="ChEBI" id="CHEBI:30616"/>
    </ligand>
</feature>
<feature type="modified residue" description="N-acetylmethionine" evidence="16 17 18">
    <location>
        <position position="1"/>
    </location>
</feature>
<feature type="modified residue" description="Phosphoserine" evidence="17">
    <location>
        <position position="3"/>
    </location>
</feature>
<feature type="modified residue" description="Phosphoserine" evidence="17">
    <location>
        <position position="15"/>
    </location>
</feature>
<feature type="modified residue" description="Phosphoserine" evidence="12">
    <location>
        <position position="218"/>
    </location>
</feature>
<feature type="modified residue" description="Phosphothreonine" evidence="12">
    <location>
        <position position="222"/>
    </location>
</feature>
<feature type="splice variant" id="VSP_004878" description="In isoform 1." evidence="13 14">
    <location>
        <begin position="1"/>
        <end position="29"/>
    </location>
</feature>
<feature type="splice variant" id="VSP_004877" description="In isoform 2." evidence="15">
    <original>MESPASSQPASMPQSK</original>
    <variation>MGVQGTLMSRDSQTPHLLSIL</variation>
    <location>
        <begin position="1"/>
        <end position="16"/>
    </location>
</feature>
<feature type="sequence variant" id="VAR_040817" evidence="10">
    <original>R</original>
    <variation>T</variation>
    <location>
        <position position="26"/>
    </location>
</feature>
<feature type="sequence variant" id="VAR_046062" description="In dbSNP:rs33911218.">
    <original>P</original>
    <variation>T</variation>
    <location>
        <position position="40"/>
    </location>
</feature>
<feature type="sequence variant" id="VAR_061742" description="In dbSNP:rs36047035.">
    <original>R</original>
    <variation>T</variation>
    <location>
        <position position="55"/>
    </location>
</feature>
<feature type="sequence variant" id="VAR_046063" description="In dbSNP:rs34105301." evidence="10">
    <original>S</original>
    <variation>P</variation>
    <location>
        <position position="68"/>
    </location>
</feature>
<feature type="sequence variant" id="VAR_046064" description="In dbSNP:rs2305873." evidence="10">
    <original>A</original>
    <variation>T</variation>
    <location>
        <position position="84"/>
    </location>
</feature>
<feature type="sequence variant" id="VAR_046065" description="In dbSNP:rs36076766." evidence="10">
    <original>M</original>
    <variation>I</variation>
    <location>
        <position position="90"/>
    </location>
</feature>
<feature type="sequence variant" id="VAR_046066" description="In dbSNP:rs56067280." evidence="10">
    <original>R</original>
    <variation>L</variation>
    <location>
        <position position="94"/>
    </location>
</feature>
<feature type="sequence variant" id="VAR_046067" description="In dbSNP:rs56216806." evidence="10">
    <original>R</original>
    <variation>W</variation>
    <location>
        <position position="96"/>
    </location>
</feature>
<feature type="sequence variant" id="VAR_014208" description="In colon cancer; dbSNP:rs1339756947." evidence="6">
    <original>R</original>
    <variation>W</variation>
    <location>
        <position position="175"/>
    </location>
</feature>
<feature type="sequence variant" id="VAR_014209" description="In colon cancer; dbSNP:rs989026404." evidence="6">
    <original>L</original>
    <variation>V</variation>
    <location>
        <position position="215"/>
    </location>
</feature>
<feature type="sequence variant" id="VAR_046068" description="In dbSNP:rs35206134." evidence="10">
    <original>R</original>
    <variation>H</variation>
    <location>
        <position position="293"/>
    </location>
</feature>
<feature type="sequence variant" id="VAR_046069" description="In dbSNP:rs2363198." evidence="10">
    <original>V</original>
    <variation>M</variation>
    <location>
        <position position="339"/>
    </location>
</feature>
<feature type="mutagenesis site" description="Inactivation." evidence="12">
    <original>S</original>
    <variation>A</variation>
    <location>
        <position position="218"/>
    </location>
</feature>
<feature type="mutagenesis site" description="Constitutive activation." evidence="12">
    <original>S</original>
    <variation>E</variation>
    <location>
        <position position="218"/>
    </location>
</feature>
<feature type="mutagenesis site" description="Inactivation." evidence="12">
    <original>T</original>
    <variation>A</variation>
    <location>
        <position position="222"/>
    </location>
</feature>
<feature type="mutagenesis site" description="Constitutive activation." evidence="12">
    <original>T</original>
    <variation>E</variation>
    <location>
        <position position="222"/>
    </location>
</feature>
<feature type="sequence conflict" description="In Ref. 1 and 3." evidence="15" ref="1 3">
    <original>E</original>
    <variation>K</variation>
    <location>
        <position position="341"/>
    </location>
</feature>
<keyword id="KW-0007">Acetylation</keyword>
<keyword id="KW-0025">Alternative splicing</keyword>
<keyword id="KW-0067">ATP-binding</keyword>
<keyword id="KW-0225">Disease variant</keyword>
<keyword id="KW-0418">Kinase</keyword>
<keyword id="KW-0547">Nucleotide-binding</keyword>
<keyword id="KW-0597">Phosphoprotein</keyword>
<keyword id="KW-1267">Proteomics identification</keyword>
<keyword id="KW-1185">Reference proteome</keyword>
<keyword id="KW-0723">Serine/threonine-protein kinase</keyword>
<keyword id="KW-0808">Transferase</keyword>
<keyword id="KW-0829">Tyrosine-protein kinase</keyword>
<organism>
    <name type="scientific">Homo sapiens</name>
    <name type="common">Human</name>
    <dbReference type="NCBI Taxonomy" id="9606"/>
    <lineage>
        <taxon>Eukaryota</taxon>
        <taxon>Metazoa</taxon>
        <taxon>Chordata</taxon>
        <taxon>Craniata</taxon>
        <taxon>Vertebrata</taxon>
        <taxon>Euteleostomi</taxon>
        <taxon>Mammalia</taxon>
        <taxon>Eutheria</taxon>
        <taxon>Euarchontoglires</taxon>
        <taxon>Primates</taxon>
        <taxon>Haplorrhini</taxon>
        <taxon>Catarrhini</taxon>
        <taxon>Hominidae</taxon>
        <taxon>Homo</taxon>
    </lineage>
</organism>
<gene>
    <name type="primary">MAP2K3</name>
    <name type="synonym">MEK3</name>
    <name type="synonym">MKK3</name>
    <name type="synonym">PRKMK3</name>
    <name type="synonym">SKK2</name>
</gene>